<accession>Q8KC71</accession>
<sequence length="278" mass="30720">MVWFKRAIPSIRTKDKRDTPEGLWSKCDSCGAALHKKQLEDHLYTCPHCGFHFRISPDLYFSFLFDDGKWEEFDAQLRAADPLKFVDTKPYPERVRSTMQKSGKSEACRNATGKLGGSDAVISGMDFGFIGGSMGSVVGEKIARAADKSVELNAPLIVISQSGGARMMEGAFSLMQMAKTSARLTRLGERGIPFISLMTDPTMGGISASFAMLGDLNISEPKALIGFAGPRVIRDTIKRDLPEGFQRAEFLQKHGFVDTIVHRKDLRAQLIKLLGHMK</sequence>
<name>ACCD_CHLTE</name>
<feature type="chain" id="PRO_0000389717" description="Acetyl-coenzyme A carboxylase carboxyl transferase subunit beta">
    <location>
        <begin position="1"/>
        <end position="278"/>
    </location>
</feature>
<feature type="domain" description="CoA carboxyltransferase N-terminal" evidence="2">
    <location>
        <begin position="23"/>
        <end position="278"/>
    </location>
</feature>
<feature type="zinc finger region" description="C4-type" evidence="1">
    <location>
        <begin position="27"/>
        <end position="49"/>
    </location>
</feature>
<feature type="binding site" evidence="1">
    <location>
        <position position="27"/>
    </location>
    <ligand>
        <name>Zn(2+)</name>
        <dbReference type="ChEBI" id="CHEBI:29105"/>
    </ligand>
</feature>
<feature type="binding site" evidence="1">
    <location>
        <position position="30"/>
    </location>
    <ligand>
        <name>Zn(2+)</name>
        <dbReference type="ChEBI" id="CHEBI:29105"/>
    </ligand>
</feature>
<feature type="binding site" evidence="1">
    <location>
        <position position="46"/>
    </location>
    <ligand>
        <name>Zn(2+)</name>
        <dbReference type="ChEBI" id="CHEBI:29105"/>
    </ligand>
</feature>
<feature type="binding site" evidence="1">
    <location>
        <position position="49"/>
    </location>
    <ligand>
        <name>Zn(2+)</name>
        <dbReference type="ChEBI" id="CHEBI:29105"/>
    </ligand>
</feature>
<organism>
    <name type="scientific">Chlorobaculum tepidum (strain ATCC 49652 / DSM 12025 / NBRC 103806 / TLS)</name>
    <name type="common">Chlorobium tepidum</name>
    <dbReference type="NCBI Taxonomy" id="194439"/>
    <lineage>
        <taxon>Bacteria</taxon>
        <taxon>Pseudomonadati</taxon>
        <taxon>Chlorobiota</taxon>
        <taxon>Chlorobiia</taxon>
        <taxon>Chlorobiales</taxon>
        <taxon>Chlorobiaceae</taxon>
        <taxon>Chlorobaculum</taxon>
    </lineage>
</organism>
<evidence type="ECO:0000255" key="1">
    <source>
        <dbReference type="HAMAP-Rule" id="MF_01395"/>
    </source>
</evidence>
<evidence type="ECO:0000255" key="2">
    <source>
        <dbReference type="PROSITE-ProRule" id="PRU01136"/>
    </source>
</evidence>
<keyword id="KW-0067">ATP-binding</keyword>
<keyword id="KW-0963">Cytoplasm</keyword>
<keyword id="KW-0275">Fatty acid biosynthesis</keyword>
<keyword id="KW-0276">Fatty acid metabolism</keyword>
<keyword id="KW-0444">Lipid biosynthesis</keyword>
<keyword id="KW-0443">Lipid metabolism</keyword>
<keyword id="KW-0479">Metal-binding</keyword>
<keyword id="KW-0547">Nucleotide-binding</keyword>
<keyword id="KW-1185">Reference proteome</keyword>
<keyword id="KW-0808">Transferase</keyword>
<keyword id="KW-0862">Zinc</keyword>
<keyword id="KW-0863">Zinc-finger</keyword>
<protein>
    <recommendedName>
        <fullName evidence="1">Acetyl-coenzyme A carboxylase carboxyl transferase subunit beta</fullName>
        <shortName evidence="1">ACCase subunit beta</shortName>
        <shortName evidence="1">Acetyl-CoA carboxylase carboxyltransferase subunit beta</shortName>
        <ecNumber evidence="1">2.1.3.15</ecNumber>
    </recommendedName>
</protein>
<proteinExistence type="inferred from homology"/>
<reference key="1">
    <citation type="journal article" date="2002" name="Proc. Natl. Acad. Sci. U.S.A.">
        <title>The complete genome sequence of Chlorobium tepidum TLS, a photosynthetic, anaerobic, green-sulfur bacterium.</title>
        <authorList>
            <person name="Eisen J.A."/>
            <person name="Nelson K.E."/>
            <person name="Paulsen I.T."/>
            <person name="Heidelberg J.F."/>
            <person name="Wu M."/>
            <person name="Dodson R.J."/>
            <person name="DeBoy R.T."/>
            <person name="Gwinn M.L."/>
            <person name="Nelson W.C."/>
            <person name="Haft D.H."/>
            <person name="Hickey E.K."/>
            <person name="Peterson J.D."/>
            <person name="Durkin A.S."/>
            <person name="Kolonay J.F."/>
            <person name="Yang F."/>
            <person name="Holt I.E."/>
            <person name="Umayam L.A."/>
            <person name="Mason T.M."/>
            <person name="Brenner M."/>
            <person name="Shea T.P."/>
            <person name="Parksey D.S."/>
            <person name="Nierman W.C."/>
            <person name="Feldblyum T.V."/>
            <person name="Hansen C.L."/>
            <person name="Craven M.B."/>
            <person name="Radune D."/>
            <person name="Vamathevan J.J."/>
            <person name="Khouri H.M."/>
            <person name="White O."/>
            <person name="Gruber T.M."/>
            <person name="Ketchum K.A."/>
            <person name="Venter J.C."/>
            <person name="Tettelin H."/>
            <person name="Bryant D.A."/>
            <person name="Fraser C.M."/>
        </authorList>
    </citation>
    <scope>NUCLEOTIDE SEQUENCE [LARGE SCALE GENOMIC DNA]</scope>
    <source>
        <strain>ATCC 49652 / DSM 12025 / NBRC 103806 / TLS</strain>
    </source>
</reference>
<comment type="function">
    <text evidence="1">Component of the acetyl coenzyme A carboxylase (ACC) complex. Biotin carboxylase (BC) catalyzes the carboxylation of biotin on its carrier protein (BCCP) and then the CO(2) group is transferred by the transcarboxylase to acetyl-CoA to form malonyl-CoA.</text>
</comment>
<comment type="catalytic activity">
    <reaction evidence="1">
        <text>N(6)-carboxybiotinyl-L-lysyl-[protein] + acetyl-CoA = N(6)-biotinyl-L-lysyl-[protein] + malonyl-CoA</text>
        <dbReference type="Rhea" id="RHEA:54728"/>
        <dbReference type="Rhea" id="RHEA-COMP:10505"/>
        <dbReference type="Rhea" id="RHEA-COMP:10506"/>
        <dbReference type="ChEBI" id="CHEBI:57288"/>
        <dbReference type="ChEBI" id="CHEBI:57384"/>
        <dbReference type="ChEBI" id="CHEBI:83144"/>
        <dbReference type="ChEBI" id="CHEBI:83145"/>
        <dbReference type="EC" id="2.1.3.15"/>
    </reaction>
</comment>
<comment type="cofactor">
    <cofactor evidence="1">
        <name>Zn(2+)</name>
        <dbReference type="ChEBI" id="CHEBI:29105"/>
    </cofactor>
    <text evidence="1">Binds 1 zinc ion per subunit.</text>
</comment>
<comment type="pathway">
    <text evidence="1">Lipid metabolism; malonyl-CoA biosynthesis; malonyl-CoA from acetyl-CoA: step 1/1.</text>
</comment>
<comment type="subunit">
    <text evidence="1">Acetyl-CoA carboxylase is a heterohexamer composed of biotin carboxyl carrier protein (AccB), biotin carboxylase (AccC) and two subunits each of ACCase subunit alpha (AccA) and ACCase subunit beta (AccD).</text>
</comment>
<comment type="subcellular location">
    <subcellularLocation>
        <location evidence="1">Cytoplasm</location>
    </subcellularLocation>
</comment>
<comment type="similarity">
    <text evidence="1">Belongs to the AccD/PCCB family.</text>
</comment>
<gene>
    <name evidence="1" type="primary">accD</name>
    <name type="ordered locus">CT1555</name>
</gene>
<dbReference type="EC" id="2.1.3.15" evidence="1"/>
<dbReference type="EMBL" id="AE006470">
    <property type="protein sequence ID" value="AAM72780.1"/>
    <property type="molecule type" value="Genomic_DNA"/>
</dbReference>
<dbReference type="RefSeq" id="NP_662438.1">
    <property type="nucleotide sequence ID" value="NC_002932.3"/>
</dbReference>
<dbReference type="RefSeq" id="WP_010933219.1">
    <property type="nucleotide sequence ID" value="NC_002932.3"/>
</dbReference>
<dbReference type="SMR" id="Q8KC71"/>
<dbReference type="STRING" id="194439.CT1555"/>
<dbReference type="EnsemblBacteria" id="AAM72780">
    <property type="protein sequence ID" value="AAM72780"/>
    <property type="gene ID" value="CT1555"/>
</dbReference>
<dbReference type="KEGG" id="cte:CT1555"/>
<dbReference type="PATRIC" id="fig|194439.7.peg.1408"/>
<dbReference type="eggNOG" id="COG0777">
    <property type="taxonomic scope" value="Bacteria"/>
</dbReference>
<dbReference type="HOGENOM" id="CLU_015486_1_0_10"/>
<dbReference type="OrthoDB" id="9772975at2"/>
<dbReference type="UniPathway" id="UPA00655">
    <property type="reaction ID" value="UER00711"/>
</dbReference>
<dbReference type="Proteomes" id="UP000001007">
    <property type="component" value="Chromosome"/>
</dbReference>
<dbReference type="GO" id="GO:0009317">
    <property type="term" value="C:acetyl-CoA carboxylase complex"/>
    <property type="evidence" value="ECO:0007669"/>
    <property type="project" value="InterPro"/>
</dbReference>
<dbReference type="GO" id="GO:0003989">
    <property type="term" value="F:acetyl-CoA carboxylase activity"/>
    <property type="evidence" value="ECO:0007669"/>
    <property type="project" value="InterPro"/>
</dbReference>
<dbReference type="GO" id="GO:0005524">
    <property type="term" value="F:ATP binding"/>
    <property type="evidence" value="ECO:0007669"/>
    <property type="project" value="UniProtKB-KW"/>
</dbReference>
<dbReference type="GO" id="GO:0016743">
    <property type="term" value="F:carboxyl- or carbamoyltransferase activity"/>
    <property type="evidence" value="ECO:0007669"/>
    <property type="project" value="UniProtKB-UniRule"/>
</dbReference>
<dbReference type="GO" id="GO:0008270">
    <property type="term" value="F:zinc ion binding"/>
    <property type="evidence" value="ECO:0007669"/>
    <property type="project" value="UniProtKB-UniRule"/>
</dbReference>
<dbReference type="GO" id="GO:0006633">
    <property type="term" value="P:fatty acid biosynthetic process"/>
    <property type="evidence" value="ECO:0007669"/>
    <property type="project" value="UniProtKB-KW"/>
</dbReference>
<dbReference type="GO" id="GO:2001295">
    <property type="term" value="P:malonyl-CoA biosynthetic process"/>
    <property type="evidence" value="ECO:0007669"/>
    <property type="project" value="UniProtKB-UniRule"/>
</dbReference>
<dbReference type="Gene3D" id="3.90.226.10">
    <property type="entry name" value="2-enoyl-CoA Hydratase, Chain A, domain 1"/>
    <property type="match status" value="1"/>
</dbReference>
<dbReference type="HAMAP" id="MF_01395">
    <property type="entry name" value="AcetylCoA_CT_beta"/>
    <property type="match status" value="1"/>
</dbReference>
<dbReference type="InterPro" id="IPR034733">
    <property type="entry name" value="AcCoA_carboxyl_beta"/>
</dbReference>
<dbReference type="InterPro" id="IPR000438">
    <property type="entry name" value="Acetyl_CoA_COase_Trfase_b_su"/>
</dbReference>
<dbReference type="InterPro" id="IPR029045">
    <property type="entry name" value="ClpP/crotonase-like_dom_sf"/>
</dbReference>
<dbReference type="InterPro" id="IPR011762">
    <property type="entry name" value="COA_CT_N"/>
</dbReference>
<dbReference type="InterPro" id="IPR041010">
    <property type="entry name" value="Znf-ACC"/>
</dbReference>
<dbReference type="NCBIfam" id="TIGR00515">
    <property type="entry name" value="accD"/>
    <property type="match status" value="1"/>
</dbReference>
<dbReference type="PANTHER" id="PTHR42995">
    <property type="entry name" value="ACETYL-COENZYME A CARBOXYLASE CARBOXYL TRANSFERASE SUBUNIT BETA, CHLOROPLASTIC"/>
    <property type="match status" value="1"/>
</dbReference>
<dbReference type="PANTHER" id="PTHR42995:SF5">
    <property type="entry name" value="ACETYL-COENZYME A CARBOXYLASE CARBOXYL TRANSFERASE SUBUNIT BETA, CHLOROPLASTIC"/>
    <property type="match status" value="1"/>
</dbReference>
<dbReference type="Pfam" id="PF01039">
    <property type="entry name" value="Carboxyl_trans"/>
    <property type="match status" value="1"/>
</dbReference>
<dbReference type="Pfam" id="PF17848">
    <property type="entry name" value="Zn_ribbon_ACC"/>
    <property type="match status" value="1"/>
</dbReference>
<dbReference type="PRINTS" id="PR01070">
    <property type="entry name" value="ACCCTRFRASEB"/>
</dbReference>
<dbReference type="SUPFAM" id="SSF52096">
    <property type="entry name" value="ClpP/crotonase"/>
    <property type="match status" value="1"/>
</dbReference>
<dbReference type="PROSITE" id="PS50980">
    <property type="entry name" value="COA_CT_NTER"/>
    <property type="match status" value="1"/>
</dbReference>